<proteinExistence type="evidence at protein level"/>
<comment type="function">
    <text evidence="1">Monomeric heme protein which primary function is to store oxygen and facilitate its diffusion within muscle tissues. Reversibly binds oxygen through a pentacoordinated heme iron and enables its timely and efficient release as needed during periods of heightened demand. Depending on the oxidative conditions of tissues and cells, and in addition to its ability to bind oxygen, it also has a nitrite reductase activity whereby it regulates the production of bioactive nitric oxide. Under stress conditions, like hypoxia and anoxia, it also protects cells against reactive oxygen species thanks to its pseudoperoxidase activity.</text>
</comment>
<comment type="catalytic activity">
    <reaction evidence="1">
        <text>Fe(III)-heme b-[protein] + nitric oxide + H2O = Fe(II)-heme b-[protein] + nitrite + 2 H(+)</text>
        <dbReference type="Rhea" id="RHEA:77711"/>
        <dbReference type="Rhea" id="RHEA-COMP:18975"/>
        <dbReference type="Rhea" id="RHEA-COMP:18976"/>
        <dbReference type="ChEBI" id="CHEBI:15377"/>
        <dbReference type="ChEBI" id="CHEBI:15378"/>
        <dbReference type="ChEBI" id="CHEBI:16301"/>
        <dbReference type="ChEBI" id="CHEBI:16480"/>
        <dbReference type="ChEBI" id="CHEBI:55376"/>
        <dbReference type="ChEBI" id="CHEBI:60344"/>
    </reaction>
    <physiologicalReaction direction="right-to-left" evidence="1">
        <dbReference type="Rhea" id="RHEA:77713"/>
    </physiologicalReaction>
</comment>
<comment type="catalytic activity">
    <reaction evidence="1">
        <text>H2O2 + AH2 = A + 2 H2O</text>
        <dbReference type="Rhea" id="RHEA:30275"/>
        <dbReference type="ChEBI" id="CHEBI:13193"/>
        <dbReference type="ChEBI" id="CHEBI:15377"/>
        <dbReference type="ChEBI" id="CHEBI:16240"/>
        <dbReference type="ChEBI" id="CHEBI:17499"/>
    </reaction>
</comment>
<comment type="subunit">
    <text evidence="2">Monomeric.</text>
</comment>
<comment type="subcellular location">
    <subcellularLocation>
        <location evidence="1">Cytoplasm</location>
        <location evidence="1">Sarcoplasm</location>
    </subcellularLocation>
</comment>
<comment type="mass spectrometry" mass="16949.0" method="MALDI" evidence="8"/>
<comment type="similarity">
    <text evidence="7">Belongs to the globin family.</text>
</comment>
<protein>
    <recommendedName>
        <fullName>Myoglobin</fullName>
    </recommendedName>
    <alternativeName>
        <fullName evidence="1">Nitrite reductase MB</fullName>
        <ecNumber evidence="1">1.7.-.-</ecNumber>
    </alternativeName>
    <alternativeName>
        <fullName evidence="1">Pseudoperoxidase MB</fullName>
        <ecNumber evidence="1">1.11.1.-</ecNumber>
    </alternativeName>
</protein>
<accession>P02192</accession>
<accession>Q3ZC11</accession>
<keyword id="KW-0963">Cytoplasm</keyword>
<keyword id="KW-0903">Direct protein sequencing</keyword>
<keyword id="KW-0349">Heme</keyword>
<keyword id="KW-0408">Iron</keyword>
<keyword id="KW-0479">Metal-binding</keyword>
<keyword id="KW-0514">Muscle protein</keyword>
<keyword id="KW-0560">Oxidoreductase</keyword>
<keyword id="KW-0561">Oxygen transport</keyword>
<keyword id="KW-0597">Phosphoprotein</keyword>
<keyword id="KW-1185">Reference proteome</keyword>
<keyword id="KW-0813">Transport</keyword>
<gene>
    <name type="primary">MB</name>
</gene>
<sequence length="154" mass="17078">MGLSDGEWQLVLNAWGKVEADVAGHGQEVLIRLFTGHPETLEKFDKFKHLKTEAEMKASEDLKKHGNTVLTALGGILKKKGHHEAEVKHLAESHANKHKIPVKYLEFISDAIIHVLHAKHPSDFGADAQAAMSKALELFRNDMAAQYKVLGFHG</sequence>
<name>MYG_BOVIN</name>
<evidence type="ECO:0000250" key="1">
    <source>
        <dbReference type="UniProtKB" id="P02144"/>
    </source>
</evidence>
<evidence type="ECO:0000250" key="2">
    <source>
        <dbReference type="UniProtKB" id="P02185"/>
    </source>
</evidence>
<evidence type="ECO:0000250" key="3">
    <source>
        <dbReference type="UniProtKB" id="P02189"/>
    </source>
</evidence>
<evidence type="ECO:0000250" key="4">
    <source>
        <dbReference type="UniProtKB" id="P04247"/>
    </source>
</evidence>
<evidence type="ECO:0000250" key="5">
    <source>
        <dbReference type="UniProtKB" id="P68082"/>
    </source>
</evidence>
<evidence type="ECO:0000250" key="6">
    <source>
        <dbReference type="UniProtKB" id="Q9QZ76"/>
    </source>
</evidence>
<evidence type="ECO:0000255" key="7">
    <source>
        <dbReference type="PROSITE-ProRule" id="PRU00238"/>
    </source>
</evidence>
<evidence type="ECO:0000269" key="8">
    <source>
    </source>
</evidence>
<evidence type="ECO:0000269" key="9">
    <source>
    </source>
</evidence>
<evidence type="ECO:0000305" key="10"/>
<reference key="1">
    <citation type="journal article" date="1989" name="J. Biochem.">
        <title>Expression of bovine myoglobin cDNA as a functionally active holoprotein in Saccharomyces cerevisiae.</title>
        <authorList>
            <person name="Shimada H."/>
            <person name="Fukasawa T."/>
            <person name="Ishimura Y."/>
        </authorList>
    </citation>
    <scope>NUCLEOTIDE SEQUENCE [MRNA]</scope>
</reference>
<reference key="2">
    <citation type="submission" date="2005-08" db="EMBL/GenBank/DDBJ databases">
        <authorList>
            <consortium name="NIH - Mammalian Gene Collection (MGC) project"/>
        </authorList>
    </citation>
    <scope>NUCLEOTIDE SEQUENCE [LARGE SCALE MRNA]</scope>
    <source>
        <strain>Hereford</strain>
        <tissue>Heart ventricle</tissue>
    </source>
</reference>
<reference key="3">
    <citation type="journal article" date="1970" name="Eur. J. Biochem.">
        <title>The covalent structure of beef heart myoglobin.</title>
        <authorList>
            <person name="Han K."/>
            <person name="Dautrevaux M."/>
            <person name="Chaila X."/>
            <person name="Biserte G."/>
        </authorList>
    </citation>
    <scope>PROTEIN SEQUENCE OF 2-154</scope>
    <source>
        <tissue>Heart</tissue>
    </source>
</reference>
<reference key="4">
    <citation type="journal article" date="2010" name="Meat Sci.">
        <title>Characterization of bison (Bison bison) myoglobin.</title>
        <authorList>
            <person name="Joseph P."/>
            <person name="Suman S.P."/>
            <person name="Li S."/>
            <person name="Beach C.M."/>
            <person name="Steinke L."/>
            <person name="Fontaine M."/>
        </authorList>
    </citation>
    <scope>MASS SPECTROMETRY</scope>
</reference>
<dbReference type="EC" id="1.7.-.-" evidence="1"/>
<dbReference type="EC" id="1.11.1.-" evidence="1"/>
<dbReference type="EMBL" id="D00409">
    <property type="protein sequence ID" value="BAA00311.1"/>
    <property type="molecule type" value="mRNA"/>
</dbReference>
<dbReference type="EMBL" id="BC102986">
    <property type="protein sequence ID" value="AAI02987.1"/>
    <property type="molecule type" value="mRNA"/>
</dbReference>
<dbReference type="PIR" id="JX0068">
    <property type="entry name" value="MYBO"/>
</dbReference>
<dbReference type="RefSeq" id="NP_776306.1">
    <property type="nucleotide sequence ID" value="NM_173881.2"/>
</dbReference>
<dbReference type="SMR" id="P02192"/>
<dbReference type="FunCoup" id="P02192">
    <property type="interactions" value="155"/>
</dbReference>
<dbReference type="STRING" id="9913.ENSBTAP00000007014"/>
<dbReference type="Allergome" id="1305">
    <property type="allergen name" value="Bos d Myoglobin"/>
</dbReference>
<dbReference type="CarbonylDB" id="P02192"/>
<dbReference type="PaxDb" id="9913-ENSBTAP00000007014"/>
<dbReference type="Ensembl" id="ENSBTAT00000084629.2">
    <property type="protein sequence ID" value="ENSBTAP00000065000.1"/>
    <property type="gene ID" value="ENSBTAG00000005333.4"/>
</dbReference>
<dbReference type="GeneID" id="280695"/>
<dbReference type="KEGG" id="bta:280695"/>
<dbReference type="CTD" id="4151"/>
<dbReference type="VEuPathDB" id="HostDB:ENSBTAG00000005333"/>
<dbReference type="VGNC" id="VGNC:31270">
    <property type="gene designation" value="MB"/>
</dbReference>
<dbReference type="eggNOG" id="KOG3378">
    <property type="taxonomic scope" value="Eukaryota"/>
</dbReference>
<dbReference type="GeneTree" id="ENSGT00940000160809"/>
<dbReference type="HOGENOM" id="CLU_003827_18_0_1"/>
<dbReference type="InParanoid" id="P02192"/>
<dbReference type="OMA" id="VIIRMFQ"/>
<dbReference type="OrthoDB" id="6344802at2759"/>
<dbReference type="TreeFam" id="TF332967"/>
<dbReference type="Reactome" id="R-BTA-8981607">
    <property type="pathway name" value="Intracellular oxygen transport"/>
</dbReference>
<dbReference type="Proteomes" id="UP000009136">
    <property type="component" value="Chromosome 5"/>
</dbReference>
<dbReference type="Bgee" id="ENSBTAG00000005333">
    <property type="expression patterns" value="Expressed in tongue muscle and 95 other cell types or tissues"/>
</dbReference>
<dbReference type="GO" id="GO:0016528">
    <property type="term" value="C:sarcoplasm"/>
    <property type="evidence" value="ECO:0000250"/>
    <property type="project" value="UniProtKB"/>
</dbReference>
<dbReference type="GO" id="GO:0020037">
    <property type="term" value="F:heme binding"/>
    <property type="evidence" value="ECO:0007669"/>
    <property type="project" value="InterPro"/>
</dbReference>
<dbReference type="GO" id="GO:0046872">
    <property type="term" value="F:metal ion binding"/>
    <property type="evidence" value="ECO:0007669"/>
    <property type="project" value="UniProtKB-KW"/>
</dbReference>
<dbReference type="GO" id="GO:0098809">
    <property type="term" value="F:nitrite reductase activity"/>
    <property type="evidence" value="ECO:0000250"/>
    <property type="project" value="UniProtKB"/>
</dbReference>
<dbReference type="GO" id="GO:0019825">
    <property type="term" value="F:oxygen binding"/>
    <property type="evidence" value="ECO:0000318"/>
    <property type="project" value="GO_Central"/>
</dbReference>
<dbReference type="GO" id="GO:0005344">
    <property type="term" value="F:oxygen carrier activity"/>
    <property type="evidence" value="ECO:0000250"/>
    <property type="project" value="UniProtKB"/>
</dbReference>
<dbReference type="GO" id="GO:0004601">
    <property type="term" value="F:peroxidase activity"/>
    <property type="evidence" value="ECO:0000250"/>
    <property type="project" value="UniProtKB"/>
</dbReference>
<dbReference type="GO" id="GO:0015671">
    <property type="term" value="P:oxygen transport"/>
    <property type="evidence" value="ECO:0000318"/>
    <property type="project" value="GO_Central"/>
</dbReference>
<dbReference type="GO" id="GO:0019430">
    <property type="term" value="P:removal of superoxide radicals"/>
    <property type="evidence" value="ECO:0000250"/>
    <property type="project" value="UniProtKB"/>
</dbReference>
<dbReference type="Gene3D" id="6.10.140.2100">
    <property type="match status" value="1"/>
</dbReference>
<dbReference type="Gene3D" id="6.10.140.2110">
    <property type="match status" value="1"/>
</dbReference>
<dbReference type="InterPro" id="IPR000971">
    <property type="entry name" value="Globin"/>
</dbReference>
<dbReference type="InterPro" id="IPR009050">
    <property type="entry name" value="Globin-like_sf"/>
</dbReference>
<dbReference type="InterPro" id="IPR002335">
    <property type="entry name" value="Myoglobin"/>
</dbReference>
<dbReference type="PANTHER" id="PTHR47132">
    <property type="entry name" value="MYOGLOBIN"/>
    <property type="match status" value="1"/>
</dbReference>
<dbReference type="PANTHER" id="PTHR47132:SF1">
    <property type="entry name" value="MYOGLOBIN"/>
    <property type="match status" value="1"/>
</dbReference>
<dbReference type="Pfam" id="PF00042">
    <property type="entry name" value="Globin"/>
    <property type="match status" value="1"/>
</dbReference>
<dbReference type="PRINTS" id="PR00613">
    <property type="entry name" value="MYOGLOBIN"/>
</dbReference>
<dbReference type="SUPFAM" id="SSF46458">
    <property type="entry name" value="Globin-like"/>
    <property type="match status" value="1"/>
</dbReference>
<dbReference type="PROSITE" id="PS01033">
    <property type="entry name" value="GLOBIN"/>
    <property type="match status" value="1"/>
</dbReference>
<organism>
    <name type="scientific">Bos taurus</name>
    <name type="common">Bovine</name>
    <dbReference type="NCBI Taxonomy" id="9913"/>
    <lineage>
        <taxon>Eukaryota</taxon>
        <taxon>Metazoa</taxon>
        <taxon>Chordata</taxon>
        <taxon>Craniata</taxon>
        <taxon>Vertebrata</taxon>
        <taxon>Euteleostomi</taxon>
        <taxon>Mammalia</taxon>
        <taxon>Eutheria</taxon>
        <taxon>Laurasiatheria</taxon>
        <taxon>Artiodactyla</taxon>
        <taxon>Ruminantia</taxon>
        <taxon>Pecora</taxon>
        <taxon>Bovidae</taxon>
        <taxon>Bovinae</taxon>
        <taxon>Bos</taxon>
    </lineage>
</organism>
<feature type="initiator methionine" description="Removed" evidence="9">
    <location>
        <position position="1"/>
    </location>
</feature>
<feature type="chain" id="PRO_0000053280" description="Myoglobin">
    <location>
        <begin position="2"/>
        <end position="154"/>
    </location>
</feature>
<feature type="domain" description="Globin" evidence="7">
    <location>
        <begin position="2"/>
        <end position="148"/>
    </location>
</feature>
<feature type="binding site" evidence="5">
    <location>
        <position position="65"/>
    </location>
    <ligand>
        <name>nitrite</name>
        <dbReference type="ChEBI" id="CHEBI:16301"/>
    </ligand>
</feature>
<feature type="binding site" evidence="3 7">
    <location>
        <position position="65"/>
    </location>
    <ligand>
        <name>O2</name>
        <dbReference type="ChEBI" id="CHEBI:15379"/>
    </ligand>
</feature>
<feature type="binding site" description="proximal binding residue" evidence="1">
    <location>
        <position position="94"/>
    </location>
    <ligand>
        <name>heme b</name>
        <dbReference type="ChEBI" id="CHEBI:60344"/>
    </ligand>
    <ligandPart>
        <name>Fe</name>
        <dbReference type="ChEBI" id="CHEBI:18248"/>
    </ligandPart>
</feature>
<feature type="modified residue" description="Phosphoserine" evidence="6">
    <location>
        <position position="4"/>
    </location>
</feature>
<feature type="modified residue" description="Phosphothreonine" evidence="4">
    <location>
        <position position="68"/>
    </location>
</feature>
<feature type="sequence conflict" description="In Ref. 2; AAI02987." evidence="10" ref="2">
    <original>G</original>
    <variation>W</variation>
    <location>
        <position position="6"/>
    </location>
</feature>
<feature type="sequence conflict" description="In Ref. 3; AA sequence." evidence="10" ref="3">
    <original>L</original>
    <variation>A</variation>
    <location>
        <position position="10"/>
    </location>
</feature>
<feature type="sequence conflict" description="In Ref. 3; AA sequence." evidence="10" ref="3">
    <original>IPV</original>
    <variation>VIP</variation>
    <location>
        <begin position="100"/>
        <end position="102"/>
    </location>
</feature>
<feature type="sequence conflict" description="In Ref. 3; AA sequence." evidence="10" ref="3">
    <original>DFG</original>
    <variation>NFA</variation>
    <location>
        <begin position="123"/>
        <end position="125"/>
    </location>
</feature>
<feature type="sequence conflict" description="In Ref. 3; AA sequence." evidence="10" ref="3">
    <original>MAAQ</original>
    <variation>AAEK</variation>
    <location>
        <begin position="143"/>
        <end position="146"/>
    </location>
</feature>